<feature type="chain" id="PRO_0000246260" description="GPI mannosyltransferase 3">
    <location>
        <begin position="1"/>
        <end position="482"/>
    </location>
</feature>
<feature type="transmembrane region" description="Helical" evidence="2">
    <location>
        <begin position="12"/>
        <end position="32"/>
    </location>
</feature>
<feature type="transmembrane region" description="Helical" evidence="2">
    <location>
        <begin position="114"/>
        <end position="134"/>
    </location>
</feature>
<feature type="transmembrane region" description="Helical" evidence="2">
    <location>
        <begin position="137"/>
        <end position="155"/>
    </location>
</feature>
<feature type="transmembrane region" description="Helical" evidence="2">
    <location>
        <begin position="175"/>
        <end position="195"/>
    </location>
</feature>
<feature type="transmembrane region" description="Helical" evidence="2">
    <location>
        <begin position="199"/>
        <end position="219"/>
    </location>
</feature>
<feature type="transmembrane region" description="Helical" evidence="2">
    <location>
        <begin position="252"/>
        <end position="272"/>
    </location>
</feature>
<feature type="transmembrane region" description="Helical" evidence="2">
    <location>
        <begin position="274"/>
        <end position="294"/>
    </location>
</feature>
<feature type="transmembrane region" description="Helical" evidence="2">
    <location>
        <begin position="324"/>
        <end position="344"/>
    </location>
</feature>
<feature type="glycosylation site" description="N-linked (GlcNAc...) asparagine" evidence="2">
    <location>
        <position position="80"/>
    </location>
</feature>
<feature type="glycosylation site" description="N-linked (GlcNAc...) asparagine" evidence="2">
    <location>
        <position position="242"/>
    </location>
</feature>
<reference key="1">
    <citation type="journal article" date="2004" name="Proc. Natl. Acad. Sci. U.S.A.">
        <title>The diploid genome sequence of Candida albicans.</title>
        <authorList>
            <person name="Jones T."/>
            <person name="Federspiel N.A."/>
            <person name="Chibana H."/>
            <person name="Dungan J."/>
            <person name="Kalman S."/>
            <person name="Magee B.B."/>
            <person name="Newport G."/>
            <person name="Thorstenson Y.R."/>
            <person name="Agabian N."/>
            <person name="Magee P.T."/>
            <person name="Davis R.W."/>
            <person name="Scherer S."/>
        </authorList>
    </citation>
    <scope>NUCLEOTIDE SEQUENCE [LARGE SCALE GENOMIC DNA]</scope>
    <source>
        <strain>SC5314 / ATCC MYA-2876</strain>
    </source>
</reference>
<reference key="2">
    <citation type="journal article" date="2007" name="Genome Biol.">
        <title>Assembly of the Candida albicans genome into sixteen supercontigs aligned on the eight chromosomes.</title>
        <authorList>
            <person name="van het Hoog M."/>
            <person name="Rast T.J."/>
            <person name="Martchenko M."/>
            <person name="Grindle S."/>
            <person name="Dignard D."/>
            <person name="Hogues H."/>
            <person name="Cuomo C."/>
            <person name="Berriman M."/>
            <person name="Scherer S."/>
            <person name="Magee B.B."/>
            <person name="Whiteway M."/>
            <person name="Chibana H."/>
            <person name="Nantel A."/>
            <person name="Magee P.T."/>
        </authorList>
    </citation>
    <scope>GENOME REANNOTATION</scope>
    <source>
        <strain>SC5314 / ATCC MYA-2876</strain>
    </source>
</reference>
<reference key="3">
    <citation type="journal article" date="2013" name="Genome Biol.">
        <title>Assembly of a phased diploid Candida albicans genome facilitates allele-specific measurements and provides a simple model for repeat and indel structure.</title>
        <authorList>
            <person name="Muzzey D."/>
            <person name="Schwartz K."/>
            <person name="Weissman J.S."/>
            <person name="Sherlock G."/>
        </authorList>
    </citation>
    <scope>NUCLEOTIDE SEQUENCE [LARGE SCALE GENOMIC DNA]</scope>
    <scope>GENOME REANNOTATION</scope>
    <source>
        <strain>SC5314 / ATCC MYA-2876</strain>
    </source>
</reference>
<dbReference type="EC" id="2.4.1.-"/>
<dbReference type="EMBL" id="CP017627">
    <property type="protein sequence ID" value="AOW29908.1"/>
    <property type="molecule type" value="Genomic_DNA"/>
</dbReference>
<dbReference type="RefSeq" id="XP_721904.2">
    <property type="nucleotide sequence ID" value="XM_716811.2"/>
</dbReference>
<dbReference type="FunCoup" id="Q5AK24">
    <property type="interactions" value="880"/>
</dbReference>
<dbReference type="STRING" id="237561.Q5AK24"/>
<dbReference type="GlyCosmos" id="Q5AK24">
    <property type="glycosylation" value="2 sites, No reported glycans"/>
</dbReference>
<dbReference type="EnsemblFungi" id="C5_05040W_A-T">
    <property type="protein sequence ID" value="C5_05040W_A-T-p1"/>
    <property type="gene ID" value="C5_05040W_A"/>
</dbReference>
<dbReference type="GeneID" id="3636488"/>
<dbReference type="KEGG" id="cal:CAALFM_C505040WA"/>
<dbReference type="CGD" id="CAL0000192151">
    <property type="gene designation" value="orf19.11479"/>
</dbReference>
<dbReference type="VEuPathDB" id="FungiDB:C5_05040W_A"/>
<dbReference type="eggNOG" id="KOG1771">
    <property type="taxonomic scope" value="Eukaryota"/>
</dbReference>
<dbReference type="HOGENOM" id="CLU_012353_0_1_1"/>
<dbReference type="InParanoid" id="Q5AK24"/>
<dbReference type="OrthoDB" id="416834at2759"/>
<dbReference type="UniPathway" id="UPA00196"/>
<dbReference type="PRO" id="PR:Q5AK24"/>
<dbReference type="Proteomes" id="UP000000559">
    <property type="component" value="Chromosome 5"/>
</dbReference>
<dbReference type="GO" id="GO:0005789">
    <property type="term" value="C:endoplasmic reticulum membrane"/>
    <property type="evidence" value="ECO:0000318"/>
    <property type="project" value="GO_Central"/>
</dbReference>
<dbReference type="GO" id="GO:0000026">
    <property type="term" value="F:alpha-1,2-mannosyltransferase activity"/>
    <property type="evidence" value="ECO:0000318"/>
    <property type="project" value="GO_Central"/>
</dbReference>
<dbReference type="GO" id="GO:0006506">
    <property type="term" value="P:GPI anchor biosynthetic process"/>
    <property type="evidence" value="ECO:0000318"/>
    <property type="project" value="GO_Central"/>
</dbReference>
<dbReference type="InterPro" id="IPR005599">
    <property type="entry name" value="GPI_mannosylTrfase"/>
</dbReference>
<dbReference type="PANTHER" id="PTHR22760">
    <property type="entry name" value="GLYCOSYLTRANSFERASE"/>
    <property type="match status" value="1"/>
</dbReference>
<dbReference type="PANTHER" id="PTHR22760:SF4">
    <property type="entry name" value="GPI MANNOSYLTRANSFERASE 3"/>
    <property type="match status" value="1"/>
</dbReference>
<dbReference type="Pfam" id="PF03901">
    <property type="entry name" value="Glyco_transf_22"/>
    <property type="match status" value="1"/>
</dbReference>
<gene>
    <name type="primary">GPI10</name>
    <name type="ordered locus">CAALFM_C505040WA</name>
    <name type="ORF">CaO19.11479</name>
    <name type="ORF">CaO19.3996</name>
</gene>
<proteinExistence type="inferred from homology"/>
<name>GPI10_CANAL</name>
<comment type="function">
    <text evidence="1">Mannosyltransferase involved in glycosylphosphatidylinositol-anchor biosynthesis. Transfers the third mannose to Man2-GlcN-acyl-PI during GPI precursor assembly (By similarity).</text>
</comment>
<comment type="pathway">
    <text>Glycolipid biosynthesis; glycosylphosphatidylinositol-anchor biosynthesis.</text>
</comment>
<comment type="subcellular location">
    <subcellularLocation>
        <location evidence="1">Endoplasmic reticulum membrane</location>
        <topology evidence="1">Multi-pass membrane protein</topology>
    </subcellularLocation>
</comment>
<comment type="similarity">
    <text evidence="3">Belongs to the glycosyltransferase 22 family. PIGB subfamily.</text>
</comment>
<sequence>MTKSTVLSSYKLFAFIFIFRLANSFAIETFFQADEFFQALEPAHHFVYGYGYLTWEWKQQLRSAIHPLIYVLGYKLVGDNTTLVCISPKVINALIAAIGEYNLYKFIIVYDSEKLAWITLMLSLFNPFNWYVITRSFSNNLEMVFTVLALRFWPWNKKINGRWYISLGFGFVSCIIRPTNILIWIPLGIWLLISIRITLKWVALSFLEVVLILLINTALDYYFYQKLTFPLYNFLEFNVFKNLSIFYGTAPWHFYIFQAIPLMLMLYLPLMIYGLKKNILLLTGLFYIIGFSLIQHKEFRFIYPIHPILLYFTARGYVKFKPKFVLIGILLNICIGLFFTNVHERGVIDLTKYLATQQTPSVGFITPCHSTPWQSYFHNPNLDTNSWFLACEPPLHLNKPSMEEIRHYRDQSDQFYDAPESFLQTHLGKDLPKTEQLVVFEPLEPLMNDYLGREYYECQRFYNSFFHWDSRRDGDIIVYCRN</sequence>
<keyword id="KW-0256">Endoplasmic reticulum</keyword>
<keyword id="KW-0325">Glycoprotein</keyword>
<keyword id="KW-0328">Glycosyltransferase</keyword>
<keyword id="KW-0337">GPI-anchor biosynthesis</keyword>
<keyword id="KW-0472">Membrane</keyword>
<keyword id="KW-1185">Reference proteome</keyword>
<keyword id="KW-0808">Transferase</keyword>
<keyword id="KW-0812">Transmembrane</keyword>
<keyword id="KW-1133">Transmembrane helix</keyword>
<accession>Q5AK24</accession>
<accession>A0A1D8PP48</accession>
<accession>Q5AKI6</accession>
<protein>
    <recommendedName>
        <fullName>GPI mannosyltransferase 3</fullName>
        <ecNumber>2.4.1.-</ecNumber>
    </recommendedName>
    <alternativeName>
        <fullName>GPI mannosyltransferase III</fullName>
        <shortName>GPI-MT-III</shortName>
    </alternativeName>
    <alternativeName>
        <fullName>Glycosylphosphatidylinositol-anchor biosynthesis protein 10</fullName>
    </alternativeName>
</protein>
<organism>
    <name type="scientific">Candida albicans (strain SC5314 / ATCC MYA-2876)</name>
    <name type="common">Yeast</name>
    <dbReference type="NCBI Taxonomy" id="237561"/>
    <lineage>
        <taxon>Eukaryota</taxon>
        <taxon>Fungi</taxon>
        <taxon>Dikarya</taxon>
        <taxon>Ascomycota</taxon>
        <taxon>Saccharomycotina</taxon>
        <taxon>Pichiomycetes</taxon>
        <taxon>Debaryomycetaceae</taxon>
        <taxon>Candida/Lodderomyces clade</taxon>
        <taxon>Candida</taxon>
    </lineage>
</organism>
<evidence type="ECO:0000250" key="1"/>
<evidence type="ECO:0000255" key="2"/>
<evidence type="ECO:0000305" key="3"/>